<organism>
    <name type="scientific">Vibrio atlanticus (strain LGP32)</name>
    <name type="common">Vibrio splendidus (strain Mel32)</name>
    <dbReference type="NCBI Taxonomy" id="575788"/>
    <lineage>
        <taxon>Bacteria</taxon>
        <taxon>Pseudomonadati</taxon>
        <taxon>Pseudomonadota</taxon>
        <taxon>Gammaproteobacteria</taxon>
        <taxon>Vibrionales</taxon>
        <taxon>Vibrionaceae</taxon>
        <taxon>Vibrio</taxon>
    </lineage>
</organism>
<comment type="function">
    <text evidence="1">Could be involved in insertion of integral membrane proteins into the membrane.</text>
</comment>
<comment type="subcellular location">
    <subcellularLocation>
        <location evidence="1">Cell inner membrane</location>
        <topology evidence="1">Peripheral membrane protein</topology>
        <orientation evidence="1">Cytoplasmic side</orientation>
    </subcellularLocation>
</comment>
<comment type="similarity">
    <text evidence="1">Belongs to the UPF0161 family.</text>
</comment>
<sequence length="85" mass="9649">MASPVSPFAWIALIPIYFYRWFISPLIGPRCRFTPTCSLYAIEALKAHGFVKGCWLSGKRLLKCHPLNEGGFDPVPPVQKQDRDK</sequence>
<feature type="chain" id="PRO_1000197801" description="Putative membrane protein insertion efficiency factor">
    <location>
        <begin position="1"/>
        <end position="85"/>
    </location>
</feature>
<name>YIDD_VIBA3</name>
<reference key="1">
    <citation type="submission" date="2009-02" db="EMBL/GenBank/DDBJ databases">
        <title>Vibrio splendidus str. LGP32 complete genome.</title>
        <authorList>
            <person name="Mazel D."/>
            <person name="Le Roux F."/>
        </authorList>
    </citation>
    <scope>NUCLEOTIDE SEQUENCE [LARGE SCALE GENOMIC DNA]</scope>
    <source>
        <strain>LGP32</strain>
    </source>
</reference>
<gene>
    <name type="ordered locus">VS_0004</name>
</gene>
<proteinExistence type="inferred from homology"/>
<keyword id="KW-0997">Cell inner membrane</keyword>
<keyword id="KW-1003">Cell membrane</keyword>
<keyword id="KW-0472">Membrane</keyword>
<evidence type="ECO:0000255" key="1">
    <source>
        <dbReference type="HAMAP-Rule" id="MF_00386"/>
    </source>
</evidence>
<protein>
    <recommendedName>
        <fullName evidence="1">Putative membrane protein insertion efficiency factor</fullName>
    </recommendedName>
</protein>
<accession>B7VGH8</accession>
<dbReference type="EMBL" id="FM954972">
    <property type="protein sequence ID" value="CAV17061.1"/>
    <property type="molecule type" value="Genomic_DNA"/>
</dbReference>
<dbReference type="STRING" id="575788.VS_0004"/>
<dbReference type="KEGG" id="vsp:VS_0004"/>
<dbReference type="eggNOG" id="COG0759">
    <property type="taxonomic scope" value="Bacteria"/>
</dbReference>
<dbReference type="HOGENOM" id="CLU_144811_5_2_6"/>
<dbReference type="Proteomes" id="UP000009100">
    <property type="component" value="Chromosome 1"/>
</dbReference>
<dbReference type="GO" id="GO:0005886">
    <property type="term" value="C:plasma membrane"/>
    <property type="evidence" value="ECO:0007669"/>
    <property type="project" value="UniProtKB-SubCell"/>
</dbReference>
<dbReference type="HAMAP" id="MF_00386">
    <property type="entry name" value="UPF0161_YidD"/>
    <property type="match status" value="1"/>
</dbReference>
<dbReference type="InterPro" id="IPR002696">
    <property type="entry name" value="Membr_insert_effic_factor_YidD"/>
</dbReference>
<dbReference type="NCBIfam" id="TIGR00278">
    <property type="entry name" value="membrane protein insertion efficiency factor YidD"/>
    <property type="match status" value="1"/>
</dbReference>
<dbReference type="PANTHER" id="PTHR33383">
    <property type="entry name" value="MEMBRANE PROTEIN INSERTION EFFICIENCY FACTOR-RELATED"/>
    <property type="match status" value="1"/>
</dbReference>
<dbReference type="PANTHER" id="PTHR33383:SF1">
    <property type="entry name" value="MEMBRANE PROTEIN INSERTION EFFICIENCY FACTOR-RELATED"/>
    <property type="match status" value="1"/>
</dbReference>
<dbReference type="Pfam" id="PF01809">
    <property type="entry name" value="YidD"/>
    <property type="match status" value="1"/>
</dbReference>
<dbReference type="SMART" id="SM01234">
    <property type="entry name" value="Haemolytic"/>
    <property type="match status" value="1"/>
</dbReference>